<feature type="chain" id="PRO_0000337638" description="3-(3-hydroxy-phenyl)propionate/3-hydroxycinnamic acid hydroxylase">
    <location>
        <begin position="1"/>
        <end position="568"/>
    </location>
</feature>
<feature type="binding site" evidence="1">
    <location>
        <begin position="13"/>
        <end position="42"/>
    </location>
    <ligand>
        <name>FAD</name>
        <dbReference type="ChEBI" id="CHEBI:57692"/>
    </ligand>
</feature>
<feature type="binding site" evidence="1">
    <location>
        <begin position="278"/>
        <end position="288"/>
    </location>
    <ligand>
        <name>FAD</name>
        <dbReference type="ChEBI" id="CHEBI:57692"/>
    </ligand>
</feature>
<name>MHPA_MYCSJ</name>
<proteinExistence type="inferred from homology"/>
<accession>A3Q339</accession>
<sequence>MTPATERDDTDTDVVIVGAGPVGLTLANILGLQGVRTMIVEERATLIDYPRGVGLDDEALRTFQAIGLVDKVLPHTVPNQILRFFDGNRRLLAEMAPPDARFGWPKRNGFVQPMVDAELHAGLARFPHVEVRWGHRMAECEETADGVTVRLDGDPTPVRARYLVGCDGGRSATRRLMGVSFDGTTSPTRWLVVDIANDPLGHPNSEVGADPARPYASISIAHGIRRFEFMIHADETDEQAEDPAFIHRMLGLLVPHPERVEVIRHRVYTHHSRIAGAFRKGRMFLAGDAAHLMPVWQGQGYNSGIRDAANLGWKLAAVVDGRAGDALLDTYDVERRKHARAMIDLSTMVGRVISPTNRHVAAVRDKLIRGASVVPTLKRYVLEMRFKPMPRYEQGAVFHPEAPSPTSPAGTLFIQPRVDSRDAQNVLLDEVLGTGFAVLCWNNNPRALLGADLFDRWKALGARFVAARPLTQLHWTGHDDPDVTVIGDRTGALKGWFDAHAESVLFLRPDRCIAGACIAQRAPEVSTALFGVLHLTQGGGNGHHGADRPVLHVAQSATEPSGTVAGTP</sequence>
<dbReference type="EC" id="1.14.13.127" evidence="1"/>
<dbReference type="EMBL" id="CP000580">
    <property type="protein sequence ID" value="ABN99566.1"/>
    <property type="molecule type" value="Genomic_DNA"/>
</dbReference>
<dbReference type="SMR" id="A3Q339"/>
<dbReference type="KEGG" id="mjl:Mjls_3790"/>
<dbReference type="HOGENOM" id="CLU_009665_20_2_11"/>
<dbReference type="BioCyc" id="MSP164757:G1G8C-3826-MONOMER"/>
<dbReference type="UniPathway" id="UPA00714"/>
<dbReference type="GO" id="GO:0008688">
    <property type="term" value="F:3-(3-hydroxyphenyl)propionate hydroxylase activity"/>
    <property type="evidence" value="ECO:0007669"/>
    <property type="project" value="UniProtKB-UniRule"/>
</dbReference>
<dbReference type="GO" id="GO:0071949">
    <property type="term" value="F:FAD binding"/>
    <property type="evidence" value="ECO:0007669"/>
    <property type="project" value="InterPro"/>
</dbReference>
<dbReference type="GO" id="GO:0019622">
    <property type="term" value="P:3-(3-hydroxy)phenylpropionate catabolic process"/>
    <property type="evidence" value="ECO:0007669"/>
    <property type="project" value="UniProtKB-UniRule"/>
</dbReference>
<dbReference type="GO" id="GO:0019380">
    <property type="term" value="P:3-phenylpropionate catabolic process"/>
    <property type="evidence" value="ECO:0007669"/>
    <property type="project" value="UniProtKB-UniPathway"/>
</dbReference>
<dbReference type="Gene3D" id="3.30.70.2450">
    <property type="match status" value="1"/>
</dbReference>
<dbReference type="Gene3D" id="3.50.50.60">
    <property type="entry name" value="FAD/NAD(P)-binding domain"/>
    <property type="match status" value="1"/>
</dbReference>
<dbReference type="HAMAP" id="MF_01652">
    <property type="entry name" value="MhpA"/>
    <property type="match status" value="1"/>
</dbReference>
<dbReference type="InterPro" id="IPR023786">
    <property type="entry name" value="3-HPP/3HCI_hydroxylase"/>
</dbReference>
<dbReference type="InterPro" id="IPR002938">
    <property type="entry name" value="FAD-bd"/>
</dbReference>
<dbReference type="InterPro" id="IPR036188">
    <property type="entry name" value="FAD/NAD-bd_sf"/>
</dbReference>
<dbReference type="InterPro" id="IPR050631">
    <property type="entry name" value="PheA/TfdB_FAD_monoxygenase"/>
</dbReference>
<dbReference type="NCBIfam" id="NF004828">
    <property type="entry name" value="PRK06183.1-2"/>
    <property type="match status" value="1"/>
</dbReference>
<dbReference type="NCBIfam" id="NF004829">
    <property type="entry name" value="PRK06183.1-3"/>
    <property type="match status" value="1"/>
</dbReference>
<dbReference type="NCBIfam" id="NF004831">
    <property type="entry name" value="PRK06183.1-5"/>
    <property type="match status" value="1"/>
</dbReference>
<dbReference type="PANTHER" id="PTHR43476">
    <property type="entry name" value="3-(3-HYDROXY-PHENYL)PROPIONATE/3-HYDROXYCINNAMIC ACID HYDROXYLASE"/>
    <property type="match status" value="1"/>
</dbReference>
<dbReference type="PANTHER" id="PTHR43476:SF3">
    <property type="entry name" value="FAD-BINDING MONOOXYGENASE"/>
    <property type="match status" value="1"/>
</dbReference>
<dbReference type="Pfam" id="PF01494">
    <property type="entry name" value="FAD_binding_3"/>
    <property type="match status" value="1"/>
</dbReference>
<dbReference type="PRINTS" id="PR00420">
    <property type="entry name" value="RNGMNOXGNASE"/>
</dbReference>
<dbReference type="SUPFAM" id="SSF51905">
    <property type="entry name" value="FAD/NAD(P)-binding domain"/>
    <property type="match status" value="1"/>
</dbReference>
<evidence type="ECO:0000255" key="1">
    <source>
        <dbReference type="HAMAP-Rule" id="MF_01652"/>
    </source>
</evidence>
<reference key="1">
    <citation type="submission" date="2007-02" db="EMBL/GenBank/DDBJ databases">
        <title>Complete sequence of Mycobacterium sp. JLS.</title>
        <authorList>
            <consortium name="US DOE Joint Genome Institute"/>
            <person name="Copeland A."/>
            <person name="Lucas S."/>
            <person name="Lapidus A."/>
            <person name="Barry K."/>
            <person name="Detter J.C."/>
            <person name="Glavina del Rio T."/>
            <person name="Hammon N."/>
            <person name="Israni S."/>
            <person name="Dalin E."/>
            <person name="Tice H."/>
            <person name="Pitluck S."/>
            <person name="Chain P."/>
            <person name="Malfatti S."/>
            <person name="Shin M."/>
            <person name="Vergez L."/>
            <person name="Schmutz J."/>
            <person name="Larimer F."/>
            <person name="Land M."/>
            <person name="Hauser L."/>
            <person name="Kyrpides N."/>
            <person name="Mikhailova N."/>
            <person name="Miller C.D."/>
            <person name="Anderson A.J."/>
            <person name="Sims R.C."/>
            <person name="Richardson P."/>
        </authorList>
    </citation>
    <scope>NUCLEOTIDE SEQUENCE [LARGE SCALE GENOMIC DNA]</scope>
    <source>
        <strain>JLS</strain>
    </source>
</reference>
<gene>
    <name evidence="1" type="primary">mhpA</name>
    <name type="ordered locus">Mjls_3790</name>
</gene>
<organism>
    <name type="scientific">Mycobacterium sp. (strain JLS)</name>
    <dbReference type="NCBI Taxonomy" id="164757"/>
    <lineage>
        <taxon>Bacteria</taxon>
        <taxon>Bacillati</taxon>
        <taxon>Actinomycetota</taxon>
        <taxon>Actinomycetes</taxon>
        <taxon>Mycobacteriales</taxon>
        <taxon>Mycobacteriaceae</taxon>
        <taxon>Mycobacterium</taxon>
    </lineage>
</organism>
<protein>
    <recommendedName>
        <fullName evidence="1">3-(3-hydroxy-phenyl)propionate/3-hydroxycinnamic acid hydroxylase</fullName>
        <shortName evidence="1">3-HCI hydroxylase</shortName>
        <shortName evidence="1">3-HPP hydroxylase</shortName>
        <ecNumber evidence="1">1.14.13.127</ecNumber>
    </recommendedName>
</protein>
<comment type="function">
    <text evidence="1">Catalyzes the insertion of one atom of molecular oxygen into position 2 of the phenyl ring of 3-(3-hydroxyphenyl)propionate (3-HPP) and hydroxycinnamic acid (3HCI).</text>
</comment>
<comment type="catalytic activity">
    <reaction evidence="1">
        <text>3-(3-hydroxyphenyl)propanoate + NADH + O2 + H(+) = 3-(2,3-dihydroxyphenyl)propanoate + NAD(+) + H2O</text>
        <dbReference type="Rhea" id="RHEA:24785"/>
        <dbReference type="ChEBI" id="CHEBI:15377"/>
        <dbReference type="ChEBI" id="CHEBI:15378"/>
        <dbReference type="ChEBI" id="CHEBI:15379"/>
        <dbReference type="ChEBI" id="CHEBI:46951"/>
        <dbReference type="ChEBI" id="CHEBI:57277"/>
        <dbReference type="ChEBI" id="CHEBI:57540"/>
        <dbReference type="ChEBI" id="CHEBI:57945"/>
        <dbReference type="EC" id="1.14.13.127"/>
    </reaction>
</comment>
<comment type="catalytic activity">
    <reaction evidence="1">
        <text>(2E)-3-(3-hydroxyphenyl)prop-2-enoate + NADH + O2 + H(+) = (2E)-3-(2,3-dihydroxyphenyl)prop-2-enoate + NAD(+) + H2O</text>
        <dbReference type="Rhea" id="RHEA:27846"/>
        <dbReference type="ChEBI" id="CHEBI:15377"/>
        <dbReference type="ChEBI" id="CHEBI:15378"/>
        <dbReference type="ChEBI" id="CHEBI:15379"/>
        <dbReference type="ChEBI" id="CHEBI:47928"/>
        <dbReference type="ChEBI" id="CHEBI:57540"/>
        <dbReference type="ChEBI" id="CHEBI:57945"/>
        <dbReference type="ChEBI" id="CHEBI:58642"/>
        <dbReference type="EC" id="1.14.13.127"/>
    </reaction>
</comment>
<comment type="cofactor">
    <cofactor evidence="1">
        <name>FAD</name>
        <dbReference type="ChEBI" id="CHEBI:57692"/>
    </cofactor>
</comment>
<comment type="pathway">
    <text evidence="1">Aromatic compound metabolism; 3-phenylpropanoate degradation.</text>
</comment>
<comment type="similarity">
    <text evidence="1">Belongs to the PheA/TfdB FAD monooxygenase family.</text>
</comment>
<keyword id="KW-0058">Aromatic hydrocarbons catabolism</keyword>
<keyword id="KW-0274">FAD</keyword>
<keyword id="KW-0285">Flavoprotein</keyword>
<keyword id="KW-0520">NAD</keyword>
<keyword id="KW-0560">Oxidoreductase</keyword>